<name>SUSG_BACTN</name>
<protein>
    <recommendedName>
        <fullName>Alpha-amylase SusG</fullName>
        <ecNumber evidence="5">3.2.1.1</ecNumber>
    </recommendedName>
    <alternativeName>
        <fullName>Starch-utilization system protein G</fullName>
    </alternativeName>
</protein>
<keyword id="KW-0002">3D-structure</keyword>
<keyword id="KW-0106">Calcium</keyword>
<keyword id="KW-0119">Carbohydrate metabolism</keyword>
<keyword id="KW-0998">Cell outer membrane</keyword>
<keyword id="KW-0326">Glycosidase</keyword>
<keyword id="KW-0378">Hydrolase</keyword>
<keyword id="KW-0449">Lipoprotein</keyword>
<keyword id="KW-0460">Magnesium</keyword>
<keyword id="KW-0472">Membrane</keyword>
<keyword id="KW-0479">Metal-binding</keyword>
<keyword id="KW-0564">Palmitate</keyword>
<keyword id="KW-0624">Polysaccharide degradation</keyword>
<keyword id="KW-1185">Reference proteome</keyword>
<keyword id="KW-0732">Signal</keyword>
<sequence>MNKHLHFLSLLWLSMLMAFMTACSDDKNITDPAPEPEPPVEGQWTALTASPDTWDETKRADISYQLLLYSFADSDGDGYGDLNGVTQKLDYLNQLGVKALWLSPIHPCMSYHGYDVTDYTKVNPQLGTESDFDRLVTEAHNRGIKIYLDYVMNHTGTAHPWFTEASSSSESPYRNYYSFSEDPKTDIAAGKIAMITQEGAAGYNAAEWFQVSDETAAVKGLLKFTLDWSNAPSPILVVSTGTKADEDNPDTGTDNAKYLYYGEDICKKFYDKGNNIYELTVDFESTWGLLIRTSNASFWPSGTKYGASSSSEKLALNKDFKLTNAGNPANIMFDSQQITYFHSHFCTDWFADLNYGPVDQAGESPAYQAIADAAKGWIARGVDGLRLDAVKHIYHSETSEENPRFLKMFYEDMNAYYKQKGHTDDFYMIGEVLSEYDKVAPYYKGLPALFEFSFWYRLEWGINNSTGCYFAKDILSYQQKYANYRSDYIEATKLSNHDEDRTSSKLGKSADKCKLAAAVLLTSAGHPYIYYGEELGLYGTKDNGDEYVRSPMLWGDSYTTNYTDKTDATVSKNVKTVADQQADTHSLLNIYFSLTRLRNTYPALAEGNMTKHSVYNESQEKDYKPIAAWYMTKDNEKLLVIHNFGGTAMQLPLTDKIEKVLFVNGETQQNTDSDSYTLKLGGYASVVFKLGN</sequence>
<comment type="function">
    <text evidence="3 4 5">Alpha-amylase that cleaves starch into oligosaccharides before internalization for degradation, the first step in starch degradation.</text>
</comment>
<comment type="catalytic activity">
    <reaction evidence="5">
        <text>Endohydrolysis of (1-&gt;4)-alpha-D-glucosidic linkages in polysaccharides containing three or more (1-&gt;4)-alpha-linked D-glucose units.</text>
        <dbReference type="EC" id="3.2.1.1"/>
    </reaction>
</comment>
<comment type="cofactor">
    <cofactor evidence="5">
        <name>Ca(2+)</name>
        <dbReference type="ChEBI" id="CHEBI:29108"/>
    </cofactor>
    <text evidence="5">Binds 1 Ca(2+) ion per subunit.</text>
</comment>
<comment type="pathway">
    <text>Glycan degradation; starch degradation.</text>
</comment>
<comment type="subunit">
    <text evidence="5">Monomer.</text>
</comment>
<comment type="subcellular location">
    <subcellularLocation>
        <location evidence="3">Cell outer membrane</location>
        <topology evidence="2 3">Lipid-anchor</topology>
    </subcellularLocation>
</comment>
<comment type="induction">
    <text evidence="6">By maltose.</text>
</comment>
<comment type="similarity">
    <text evidence="7">Belongs to the glycosyl hydrolase 13 family.</text>
</comment>
<accession>Q8A1G3</accession>
<accession>Q45772</accession>
<organism>
    <name type="scientific">Bacteroides thetaiotaomicron (strain ATCC 29148 / DSM 2079 / JCM 5827 / CCUG 10774 / NCTC 10582 / VPI-5482 / E50)</name>
    <dbReference type="NCBI Taxonomy" id="226186"/>
    <lineage>
        <taxon>Bacteria</taxon>
        <taxon>Pseudomonadati</taxon>
        <taxon>Bacteroidota</taxon>
        <taxon>Bacteroidia</taxon>
        <taxon>Bacteroidales</taxon>
        <taxon>Bacteroidaceae</taxon>
        <taxon>Bacteroides</taxon>
    </lineage>
</organism>
<proteinExistence type="evidence at protein level"/>
<dbReference type="EC" id="3.2.1.1" evidence="5"/>
<dbReference type="EMBL" id="L77732">
    <property type="protein sequence ID" value="AAB42174.1"/>
    <property type="molecule type" value="Genomic_DNA"/>
</dbReference>
<dbReference type="EMBL" id="AE015928">
    <property type="protein sequence ID" value="AAO78803.1"/>
    <property type="molecule type" value="Genomic_DNA"/>
</dbReference>
<dbReference type="RefSeq" id="NP_812609.1">
    <property type="nucleotide sequence ID" value="NC_004663.1"/>
</dbReference>
<dbReference type="RefSeq" id="WP_011108937.1">
    <property type="nucleotide sequence ID" value="NC_004663.1"/>
</dbReference>
<dbReference type="PDB" id="3K8K">
    <property type="method" value="X-ray"/>
    <property type="resolution" value="2.20 A"/>
    <property type="chains" value="A/B=24-692"/>
</dbReference>
<dbReference type="PDB" id="3K8L">
    <property type="method" value="X-ray"/>
    <property type="resolution" value="2.30 A"/>
    <property type="chains" value="A/B=24-692"/>
</dbReference>
<dbReference type="PDB" id="3K8M">
    <property type="method" value="X-ray"/>
    <property type="resolution" value="2.50 A"/>
    <property type="chains" value="A/B=24-692"/>
</dbReference>
<dbReference type="PDB" id="6BS6">
    <property type="method" value="X-ray"/>
    <property type="resolution" value="2.17 A"/>
    <property type="chains" value="A/B=24-692"/>
</dbReference>
<dbReference type="PDB" id="9FZ0">
    <property type="method" value="X-ray"/>
    <property type="resolution" value="2.65 A"/>
    <property type="chains" value="A/B=24-692"/>
</dbReference>
<dbReference type="PDBsum" id="3K8K"/>
<dbReference type="PDBsum" id="3K8L"/>
<dbReference type="PDBsum" id="3K8M"/>
<dbReference type="PDBsum" id="6BS6"/>
<dbReference type="PDBsum" id="9FZ0"/>
<dbReference type="SMR" id="Q8A1G3"/>
<dbReference type="FunCoup" id="Q8A1G3">
    <property type="interactions" value="350"/>
</dbReference>
<dbReference type="STRING" id="226186.BT_3698"/>
<dbReference type="CAZy" id="CBM58">
    <property type="family name" value="Carbohydrate-Binding Module Family 58"/>
</dbReference>
<dbReference type="CAZy" id="GH13">
    <property type="family name" value="Glycoside Hydrolase Family 13"/>
</dbReference>
<dbReference type="TCDB" id="8.A.9.1.3">
    <property type="family name" value="the rbat transport accessory protein (rbat) family"/>
</dbReference>
<dbReference type="PaxDb" id="226186-BT_3698"/>
<dbReference type="DNASU" id="1072061"/>
<dbReference type="EnsemblBacteria" id="AAO78803">
    <property type="protein sequence ID" value="AAO78803"/>
    <property type="gene ID" value="BT_3698"/>
</dbReference>
<dbReference type="GeneID" id="60924867"/>
<dbReference type="KEGG" id="bth:BT_3698"/>
<dbReference type="PATRIC" id="fig|226186.12.peg.3758"/>
<dbReference type="eggNOG" id="COG0366">
    <property type="taxonomic scope" value="Bacteria"/>
</dbReference>
<dbReference type="HOGENOM" id="CLU_006462_2_4_10"/>
<dbReference type="InParanoid" id="Q8A1G3"/>
<dbReference type="OrthoDB" id="9805159at2"/>
<dbReference type="BRENDA" id="3.2.1.1">
    <property type="organism ID" value="709"/>
</dbReference>
<dbReference type="UniPathway" id="UPA00153"/>
<dbReference type="EvolutionaryTrace" id="Q8A1G3"/>
<dbReference type="Proteomes" id="UP000001414">
    <property type="component" value="Chromosome"/>
</dbReference>
<dbReference type="GO" id="GO:0009279">
    <property type="term" value="C:cell outer membrane"/>
    <property type="evidence" value="ECO:0007669"/>
    <property type="project" value="UniProtKB-SubCell"/>
</dbReference>
<dbReference type="GO" id="GO:0019867">
    <property type="term" value="C:outer membrane"/>
    <property type="evidence" value="ECO:0000314"/>
    <property type="project" value="MENGO"/>
</dbReference>
<dbReference type="GO" id="GO:0004556">
    <property type="term" value="F:alpha-amylase activity"/>
    <property type="evidence" value="ECO:0000314"/>
    <property type="project" value="UniProtKB"/>
</dbReference>
<dbReference type="GO" id="GO:0005509">
    <property type="term" value="F:calcium ion binding"/>
    <property type="evidence" value="ECO:0000314"/>
    <property type="project" value="UniProtKB"/>
</dbReference>
<dbReference type="GO" id="GO:0000287">
    <property type="term" value="F:magnesium ion binding"/>
    <property type="evidence" value="ECO:0000314"/>
    <property type="project" value="UniProtKB"/>
</dbReference>
<dbReference type="GO" id="GO:2001070">
    <property type="term" value="F:starch binding"/>
    <property type="evidence" value="ECO:0000314"/>
    <property type="project" value="UniProtKB"/>
</dbReference>
<dbReference type="GO" id="GO:0009313">
    <property type="term" value="P:oligosaccharide catabolic process"/>
    <property type="evidence" value="ECO:0000318"/>
    <property type="project" value="GO_Central"/>
</dbReference>
<dbReference type="GO" id="GO:0005983">
    <property type="term" value="P:starch catabolic process"/>
    <property type="evidence" value="ECO:0000314"/>
    <property type="project" value="UniProtKB"/>
</dbReference>
<dbReference type="CDD" id="cd11316">
    <property type="entry name" value="AmyAc_bac2_AmyA"/>
    <property type="match status" value="1"/>
</dbReference>
<dbReference type="CDD" id="cd12961">
    <property type="entry name" value="CBM58_SusG"/>
    <property type="match status" value="1"/>
</dbReference>
<dbReference type="FunFam" id="2.60.40.1180:FF:000195">
    <property type="entry name" value="Alpha-amylase SusG"/>
    <property type="match status" value="1"/>
</dbReference>
<dbReference type="Gene3D" id="3.20.20.80">
    <property type="entry name" value="Glycosidases"/>
    <property type="match status" value="2"/>
</dbReference>
<dbReference type="Gene3D" id="2.60.40.1180">
    <property type="entry name" value="Golgi alpha-mannosidase II"/>
    <property type="match status" value="1"/>
</dbReference>
<dbReference type="Gene3D" id="2.60.40.10">
    <property type="entry name" value="Immunoglobulins"/>
    <property type="match status" value="1"/>
</dbReference>
<dbReference type="Gene3D" id="3.90.400.10">
    <property type="entry name" value="Oligo-1,6-glucosidase, Domain 2"/>
    <property type="match status" value="1"/>
</dbReference>
<dbReference type="InterPro" id="IPR006047">
    <property type="entry name" value="Glyco_hydro_13_cat_dom"/>
</dbReference>
<dbReference type="InterPro" id="IPR013780">
    <property type="entry name" value="Glyco_hydro_b"/>
</dbReference>
<dbReference type="InterPro" id="IPR017853">
    <property type="entry name" value="Glycoside_hydrolase_SF"/>
</dbReference>
<dbReference type="InterPro" id="IPR013783">
    <property type="entry name" value="Ig-like_fold"/>
</dbReference>
<dbReference type="InterPro" id="IPR045857">
    <property type="entry name" value="O16G_dom_2"/>
</dbReference>
<dbReference type="InterPro" id="IPR056300">
    <property type="entry name" value="SusG-like_C"/>
</dbReference>
<dbReference type="InterPro" id="IPR048755">
    <property type="entry name" value="SusG_CBM58"/>
</dbReference>
<dbReference type="PANTHER" id="PTHR10357">
    <property type="entry name" value="ALPHA-AMYLASE FAMILY MEMBER"/>
    <property type="match status" value="1"/>
</dbReference>
<dbReference type="PANTHER" id="PTHR10357:SF179">
    <property type="entry name" value="NEUTRAL AND BASIC AMINO ACID TRANSPORT PROTEIN RBAT"/>
    <property type="match status" value="1"/>
</dbReference>
<dbReference type="Pfam" id="PF00128">
    <property type="entry name" value="Alpha-amylase"/>
    <property type="match status" value="2"/>
</dbReference>
<dbReference type="Pfam" id="PF23915">
    <property type="entry name" value="SusG_C"/>
    <property type="match status" value="1"/>
</dbReference>
<dbReference type="Pfam" id="PF20756">
    <property type="entry name" value="SusG_CBM58"/>
    <property type="match status" value="1"/>
</dbReference>
<dbReference type="SMART" id="SM00642">
    <property type="entry name" value="Aamy"/>
    <property type="match status" value="1"/>
</dbReference>
<dbReference type="SUPFAM" id="SSF51445">
    <property type="entry name" value="(Trans)glycosidases"/>
    <property type="match status" value="1"/>
</dbReference>
<dbReference type="SUPFAM" id="SSF51011">
    <property type="entry name" value="Glycosyl hydrolase domain"/>
    <property type="match status" value="1"/>
</dbReference>
<dbReference type="PROSITE" id="PS51257">
    <property type="entry name" value="PROKAR_LIPOPROTEIN"/>
    <property type="match status" value="1"/>
</dbReference>
<gene>
    <name type="primary">susG</name>
    <name type="ordered locus">BT_3698</name>
</gene>
<reference key="1">
    <citation type="journal article" date="1997" name="J. Bacteriol.">
        <title>Characterization of four outer membrane proteins that play a role in utilization of starch by Bacteroides thetaiotaomicron.</title>
        <authorList>
            <person name="Reeves A.R."/>
            <person name="Wang G.R."/>
            <person name="Salyers A.A."/>
        </authorList>
    </citation>
    <scope>NUCLEOTIDE SEQUENCE [GENOMIC DNA]</scope>
    <scope>INDUCTION</scope>
    <source>
        <strain>ATCC 29148 / DSM 2079 / JCM 5827 / CCUG 10774 / NCTC 10582 / VPI-5482 / E50</strain>
    </source>
</reference>
<reference key="2">
    <citation type="journal article" date="2003" name="Science">
        <title>A genomic view of the human-Bacteroides thetaiotaomicron symbiosis.</title>
        <authorList>
            <person name="Xu J."/>
            <person name="Bjursell M.K."/>
            <person name="Himrod J."/>
            <person name="Deng S."/>
            <person name="Carmichael L.K."/>
            <person name="Chiang H.C."/>
            <person name="Hooper L.V."/>
            <person name="Gordon J.I."/>
        </authorList>
    </citation>
    <scope>NUCLEOTIDE SEQUENCE [LARGE SCALE GENOMIC DNA]</scope>
    <source>
        <strain>ATCC 29148 / DSM 2079 / JCM 5827 / CCUG 10774 / NCTC 10582 / VPI-5482 / E50</strain>
    </source>
</reference>
<reference key="3">
    <citation type="journal article" date="1999" name="J. Bacteriol.">
        <title>Physiological characterization of SusG, an outer membrane protein essential for starch utilization by Bacteroides thetaiotaomicron.</title>
        <authorList>
            <person name="Shipman J.A."/>
            <person name="Cho K.H."/>
            <person name="Siegel H.A."/>
            <person name="Salyers A.A."/>
        </authorList>
    </citation>
    <scope>FUNCTION</scope>
    <scope>SUBCELLULAR LOCATION</scope>
    <source>
        <strain>ATCC 29148 / DSM 2079 / JCM 5827 / CCUG 10774 / NCTC 10582 / VPI-5482 / E50</strain>
    </source>
</reference>
<reference key="4">
    <citation type="journal article" date="2001" name="J. Bacteriol.">
        <title>Biochemical analysis of interactions between outer membrane proteins that contribute to starch utilization by Bacteroides thetaiotaomicron.</title>
        <authorList>
            <person name="Cho K.H."/>
            <person name="Salyers A.A."/>
        </authorList>
    </citation>
    <scope>FUNCTION</scope>
    <source>
        <strain>ATCC 29148 / DSM 2079 / JCM 5827 / CCUG 10774 / NCTC 10582 / VPI-5482 / E50</strain>
    </source>
</reference>
<reference key="5">
    <citation type="journal article" date="2010" name="Structure">
        <title>SusG: a unique cell-membrane-associated alpha-amylase from a prominent human gut symbiont targets complex starch molecules.</title>
        <authorList>
            <person name="Koropatkin N.M."/>
            <person name="Smith T.J."/>
        </authorList>
    </citation>
    <scope>X-RAY CRYSTALLOGRAPHY (2.20 ANGSTROMS) OF 24-692 IN COMPLEXES WITH MALTOOLIGOSACCHARIDE; CALCIUM AND MAGNESIUM</scope>
    <scope>COFACTOR</scope>
    <scope>SUBUNIT</scope>
    <scope>FUNCTION</scope>
    <scope>CATALYTIC ACTIVITY</scope>
    <scope>MUTAGENESIS OF TRP-460; TYR-469; ASP-473 AND ASP-498</scope>
    <source>
        <strain>ATCC 29148 / DSM 2079 / JCM 5827 / CCUG 10774 / NCTC 10582 / VPI-5482 / E50</strain>
    </source>
</reference>
<feature type="signal peptide" evidence="2">
    <location>
        <begin position="1"/>
        <end position="22"/>
    </location>
</feature>
<feature type="chain" id="PRO_0000425887" description="Alpha-amylase SusG">
    <location>
        <begin position="23"/>
        <end position="692"/>
    </location>
</feature>
<feature type="region of interest" description="Starch binding" evidence="8">
    <location>
        <position position="154"/>
    </location>
</feature>
<feature type="region of interest" description="Starch binding" evidence="8">
    <location>
        <begin position="260"/>
        <end position="263"/>
    </location>
</feature>
<feature type="region of interest" description="Starch binding" evidence="8">
    <location>
        <begin position="330"/>
        <end position="333"/>
    </location>
</feature>
<feature type="region of interest" description="Starch binding" evidence="8">
    <location>
        <begin position="386"/>
        <end position="392"/>
    </location>
</feature>
<feature type="region of interest" description="Starch binding" evidence="8">
    <location>
        <position position="437"/>
    </location>
</feature>
<feature type="region of interest" description="Starch binding" evidence="8">
    <location>
        <position position="457"/>
    </location>
</feature>
<feature type="active site" description="Nucleophile" evidence="1">
    <location>
        <position position="388"/>
    </location>
</feature>
<feature type="active site" description="Proton donor" evidence="1">
    <location>
        <position position="431"/>
    </location>
</feature>
<feature type="binding site" evidence="5">
    <location>
        <position position="73"/>
    </location>
    <ligand>
        <name>Mg(2+)</name>
        <dbReference type="ChEBI" id="CHEBI:18420"/>
    </ligand>
</feature>
<feature type="binding site" evidence="5">
    <location>
        <position position="75"/>
    </location>
    <ligand>
        <name>Mg(2+)</name>
        <dbReference type="ChEBI" id="CHEBI:18420"/>
    </ligand>
</feature>
<feature type="binding site" evidence="5">
    <location>
        <position position="77"/>
    </location>
    <ligand>
        <name>Mg(2+)</name>
        <dbReference type="ChEBI" id="CHEBI:18420"/>
    </ligand>
</feature>
<feature type="binding site" evidence="5">
    <location>
        <position position="79"/>
    </location>
    <ligand>
        <name>Mg(2+)</name>
        <dbReference type="ChEBI" id="CHEBI:18420"/>
    </ligand>
</feature>
<feature type="binding site" evidence="5">
    <location>
        <position position="81"/>
    </location>
    <ligand>
        <name>Mg(2+)</name>
        <dbReference type="ChEBI" id="CHEBI:18420"/>
    </ligand>
</feature>
<feature type="binding site" evidence="5">
    <location>
        <position position="153"/>
    </location>
    <ligand>
        <name>Ca(2+)</name>
        <dbReference type="ChEBI" id="CHEBI:29108"/>
    </ligand>
</feature>
<feature type="binding site" evidence="5">
    <location>
        <position position="352"/>
    </location>
    <ligand>
        <name>Ca(2+)</name>
        <dbReference type="ChEBI" id="CHEBI:29108"/>
    </ligand>
</feature>
<feature type="binding site" evidence="5">
    <location>
        <position position="392"/>
    </location>
    <ligand>
        <name>Ca(2+)</name>
        <dbReference type="ChEBI" id="CHEBI:29108"/>
    </ligand>
</feature>
<feature type="site" description="Starch" evidence="8">
    <location>
        <position position="304"/>
    </location>
</feature>
<feature type="site" description="Starch" evidence="8">
    <location>
        <begin position="472"/>
        <end position="473"/>
    </location>
</feature>
<feature type="site" description="Transition state stabilizer" evidence="8">
    <location>
        <position position="498"/>
    </location>
</feature>
<feature type="site" description="Starch" evidence="8">
    <location>
        <position position="545"/>
    </location>
</feature>
<feature type="site" description="Starch" evidence="8">
    <location>
        <position position="549"/>
    </location>
</feature>
<feature type="lipid moiety-binding region" description="N-palmitoyl cysteine" evidence="2">
    <location>
        <position position="23"/>
    </location>
</feature>
<feature type="lipid moiety-binding region" description="S-diacylglycerol cysteine" evidence="2">
    <location>
        <position position="23"/>
    </location>
</feature>
<feature type="mutagenesis site" description="Slight reduction in catalytic activity, while it does not affect the catalytic turnover rate; when associated with A-469 and V-473." evidence="5">
    <original>W</original>
    <variation>A</variation>
    <location>
        <position position="460"/>
    </location>
</feature>
<feature type="mutagenesis site" description="Slight reduction in catalytic activity, while it does not affect the catalytic turnover rate; when associated with A-460 and V-473." evidence="5">
    <original>Y</original>
    <variation>A</variation>
    <location>
        <position position="469"/>
    </location>
</feature>
<feature type="mutagenesis site" description="Slight reduction in catalytic activity, while it does not affect the catalytic turnover rate; when associated with A-460 and A-469." evidence="5">
    <original>D</original>
    <variation>V</variation>
    <location>
        <position position="473"/>
    </location>
</feature>
<feature type="mutagenesis site" description="Abolishes alpha-amylase activity." evidence="5">
    <original>D</original>
    <variation>N</variation>
    <location>
        <position position="498"/>
    </location>
</feature>
<feature type="sequence conflict" description="In Ref. 1; AAB42174." evidence="7" ref="1">
    <original>Y</original>
    <variation>N</variation>
    <location>
        <position position="456"/>
    </location>
</feature>
<feature type="sequence conflict" description="In Ref. 1; AAB42174." evidence="7" ref="1">
    <original>S</original>
    <variation>R</variation>
    <location>
        <position position="465"/>
    </location>
</feature>
<feature type="sequence conflict" description="In Ref. 1; AAB42174." evidence="7" ref="1">
    <original>D</original>
    <variation>H</variation>
    <location>
        <position position="579"/>
    </location>
</feature>
<feature type="sequence conflict" description="In Ref. 1; AAB42174." evidence="7" ref="1">
    <original>G</original>
    <variation>A</variation>
    <location>
        <position position="607"/>
    </location>
</feature>
<feature type="sequence conflict" description="In Ref. 1; AAB42174." evidence="7" ref="1">
    <original>S</original>
    <variation>C</variation>
    <location>
        <position position="685"/>
    </location>
</feature>
<feature type="strand" evidence="11">
    <location>
        <begin position="63"/>
        <end position="65"/>
    </location>
</feature>
<feature type="helix" evidence="11">
    <location>
        <begin position="68"/>
        <end position="71"/>
    </location>
</feature>
<feature type="strand" evidence="11">
    <location>
        <begin position="74"/>
        <end position="79"/>
    </location>
</feature>
<feature type="helix" evidence="11">
    <location>
        <begin position="82"/>
        <end position="87"/>
    </location>
</feature>
<feature type="helix" evidence="11">
    <location>
        <begin position="89"/>
        <end position="94"/>
    </location>
</feature>
<feature type="strand" evidence="11">
    <location>
        <begin position="98"/>
        <end position="102"/>
    </location>
</feature>
<feature type="strand" evidence="11">
    <location>
        <begin position="108"/>
        <end position="110"/>
    </location>
</feature>
<feature type="strand" evidence="11">
    <location>
        <begin position="115"/>
        <end position="117"/>
    </location>
</feature>
<feature type="helix" evidence="11">
    <location>
        <begin position="124"/>
        <end position="126"/>
    </location>
</feature>
<feature type="helix" evidence="11">
    <location>
        <begin position="129"/>
        <end position="141"/>
    </location>
</feature>
<feature type="strand" evidence="11">
    <location>
        <begin position="145"/>
        <end position="150"/>
    </location>
</feature>
<feature type="strand" evidence="11">
    <location>
        <begin position="153"/>
        <end position="156"/>
    </location>
</feature>
<feature type="helix" evidence="11">
    <location>
        <begin position="160"/>
        <end position="165"/>
    </location>
</feature>
<feature type="helix" evidence="11">
    <location>
        <begin position="174"/>
        <end position="176"/>
    </location>
</feature>
<feature type="strand" evidence="11">
    <location>
        <begin position="179"/>
        <end position="182"/>
    </location>
</feature>
<feature type="helix" evidence="11">
    <location>
        <begin position="183"/>
        <end position="188"/>
    </location>
</feature>
<feature type="helix" evidence="10">
    <location>
        <begin position="193"/>
        <end position="195"/>
    </location>
</feature>
<feature type="helix" evidence="11">
    <location>
        <begin position="199"/>
        <end position="202"/>
    </location>
</feature>
<feature type="helix" evidence="11">
    <location>
        <begin position="205"/>
        <end position="207"/>
    </location>
</feature>
<feature type="strand" evidence="11">
    <location>
        <begin position="208"/>
        <end position="211"/>
    </location>
</feature>
<feature type="strand" evidence="11">
    <location>
        <begin position="218"/>
        <end position="227"/>
    </location>
</feature>
<feature type="turn" evidence="9">
    <location>
        <begin position="229"/>
        <end position="232"/>
    </location>
</feature>
<feature type="strand" evidence="11">
    <location>
        <begin position="235"/>
        <end position="240"/>
    </location>
</feature>
<feature type="strand" evidence="11">
    <location>
        <begin position="258"/>
        <end position="261"/>
    </location>
</feature>
<feature type="turn" evidence="11">
    <location>
        <begin position="262"/>
        <end position="264"/>
    </location>
</feature>
<feature type="strand" evidence="11">
    <location>
        <begin position="265"/>
        <end position="268"/>
    </location>
</feature>
<feature type="strand" evidence="9">
    <location>
        <begin position="270"/>
        <end position="273"/>
    </location>
</feature>
<feature type="strand" evidence="11">
    <location>
        <begin position="276"/>
        <end position="287"/>
    </location>
</feature>
<feature type="strand" evidence="11">
    <location>
        <begin position="289"/>
        <end position="293"/>
    </location>
</feature>
<feature type="strand" evidence="11">
    <location>
        <begin position="296"/>
        <end position="298"/>
    </location>
</feature>
<feature type="strand" evidence="11">
    <location>
        <begin position="304"/>
        <end position="309"/>
    </location>
</feature>
<feature type="strand" evidence="11">
    <location>
        <begin position="325"/>
        <end position="327"/>
    </location>
</feature>
<feature type="strand" evidence="11">
    <location>
        <begin position="331"/>
        <end position="333"/>
    </location>
</feature>
<feature type="strand" evidence="11">
    <location>
        <begin position="340"/>
        <end position="342"/>
    </location>
</feature>
<feature type="strand" evidence="11">
    <location>
        <begin position="350"/>
        <end position="353"/>
    </location>
</feature>
<feature type="helix" evidence="11">
    <location>
        <begin position="358"/>
        <end position="363"/>
    </location>
</feature>
<feature type="helix" evidence="11">
    <location>
        <begin position="365"/>
        <end position="378"/>
    </location>
</feature>
<feature type="turn" evidence="11">
    <location>
        <begin position="379"/>
        <end position="381"/>
    </location>
</feature>
<feature type="strand" evidence="11">
    <location>
        <begin position="384"/>
        <end position="387"/>
    </location>
</feature>
<feature type="helix" evidence="11">
    <location>
        <begin position="390"/>
        <end position="392"/>
    </location>
</feature>
<feature type="strand" evidence="11">
    <location>
        <begin position="393"/>
        <end position="395"/>
    </location>
</feature>
<feature type="strand" evidence="11">
    <location>
        <begin position="397"/>
        <end position="400"/>
    </location>
</feature>
<feature type="helix" evidence="11">
    <location>
        <begin position="401"/>
        <end position="419"/>
    </location>
</feature>
<feature type="strand" evidence="11">
    <location>
        <begin position="427"/>
        <end position="430"/>
    </location>
</feature>
<feature type="helix" evidence="11">
    <location>
        <begin position="436"/>
        <end position="439"/>
    </location>
</feature>
<feature type="helix" evidence="11">
    <location>
        <begin position="440"/>
        <end position="444"/>
    </location>
</feature>
<feature type="strand" evidence="11">
    <location>
        <begin position="447"/>
        <end position="450"/>
    </location>
</feature>
<feature type="helix" evidence="11">
    <location>
        <begin position="452"/>
        <end position="463"/>
    </location>
</feature>
<feature type="helix" evidence="11">
    <location>
        <begin position="470"/>
        <end position="484"/>
    </location>
</feature>
<feature type="strand" evidence="11">
    <location>
        <begin position="489"/>
        <end position="491"/>
    </location>
</feature>
<feature type="helix" evidence="11">
    <location>
        <begin position="502"/>
        <end position="505"/>
    </location>
</feature>
<feature type="turn" evidence="11">
    <location>
        <begin position="506"/>
        <end position="508"/>
    </location>
</feature>
<feature type="helix" evidence="11">
    <location>
        <begin position="510"/>
        <end position="522"/>
    </location>
</feature>
<feature type="strand" evidence="11">
    <location>
        <begin position="523"/>
        <end position="525"/>
    </location>
</feature>
<feature type="strand" evidence="11">
    <location>
        <begin position="528"/>
        <end position="530"/>
    </location>
</feature>
<feature type="turn" evidence="11">
    <location>
        <begin position="531"/>
        <end position="536"/>
    </location>
</feature>
<feature type="helix" evidence="11">
    <location>
        <begin position="545"/>
        <end position="548"/>
    </location>
</feature>
<feature type="helix" evidence="11">
    <location>
        <begin position="570"/>
        <end position="573"/>
    </location>
</feature>
<feature type="helix" evidence="11">
    <location>
        <begin position="577"/>
        <end position="582"/>
    </location>
</feature>
<feature type="helix" evidence="11">
    <location>
        <begin position="587"/>
        <end position="600"/>
    </location>
</feature>
<feature type="helix" evidence="11">
    <location>
        <begin position="602"/>
        <end position="605"/>
    </location>
</feature>
<feature type="strand" evidence="11">
    <location>
        <begin position="608"/>
        <end position="611"/>
    </location>
</feature>
<feature type="strand" evidence="11">
    <location>
        <begin position="613"/>
        <end position="616"/>
    </location>
</feature>
<feature type="helix" evidence="11">
    <location>
        <begin position="617"/>
        <end position="619"/>
    </location>
</feature>
<feature type="turn" evidence="11">
    <location>
        <begin position="620"/>
        <end position="622"/>
    </location>
</feature>
<feature type="strand" evidence="11">
    <location>
        <begin position="626"/>
        <end position="633"/>
    </location>
</feature>
<feature type="strand" evidence="11">
    <location>
        <begin position="636"/>
        <end position="643"/>
    </location>
</feature>
<feature type="strand" evidence="11">
    <location>
        <begin position="645"/>
        <end position="647"/>
    </location>
</feature>
<feature type="strand" evidence="11">
    <location>
        <begin position="649"/>
        <end position="653"/>
    </location>
</feature>
<feature type="strand" evidence="11">
    <location>
        <begin position="657"/>
        <end position="670"/>
    </location>
</feature>
<feature type="helix" evidence="9">
    <location>
        <begin position="672"/>
        <end position="674"/>
    </location>
</feature>
<feature type="strand" evidence="11">
    <location>
        <begin position="676"/>
        <end position="680"/>
    </location>
</feature>
<feature type="strand" evidence="11">
    <location>
        <begin position="685"/>
        <end position="690"/>
    </location>
</feature>
<evidence type="ECO:0000250" key="1"/>
<evidence type="ECO:0000255" key="2">
    <source>
        <dbReference type="PROSITE-ProRule" id="PRU00303"/>
    </source>
</evidence>
<evidence type="ECO:0000269" key="3">
    <source>
    </source>
</evidence>
<evidence type="ECO:0000269" key="4">
    <source>
    </source>
</evidence>
<evidence type="ECO:0000269" key="5">
    <source>
    </source>
</evidence>
<evidence type="ECO:0000269" key="6">
    <source>
    </source>
</evidence>
<evidence type="ECO:0000305" key="7"/>
<evidence type="ECO:0000305" key="8">
    <source>
    </source>
</evidence>
<evidence type="ECO:0007829" key="9">
    <source>
        <dbReference type="PDB" id="3K8K"/>
    </source>
</evidence>
<evidence type="ECO:0007829" key="10">
    <source>
        <dbReference type="PDB" id="3K8M"/>
    </source>
</evidence>
<evidence type="ECO:0007829" key="11">
    <source>
        <dbReference type="PDB" id="6BS6"/>
    </source>
</evidence>